<reference key="1">
    <citation type="journal article" date="2005" name="Genome Res.">
        <title>Coping with cold: the genome of the versatile marine Antarctica bacterium Pseudoalteromonas haloplanktis TAC125.</title>
        <authorList>
            <person name="Medigue C."/>
            <person name="Krin E."/>
            <person name="Pascal G."/>
            <person name="Barbe V."/>
            <person name="Bernsel A."/>
            <person name="Bertin P.N."/>
            <person name="Cheung F."/>
            <person name="Cruveiller S."/>
            <person name="D'Amico S."/>
            <person name="Duilio A."/>
            <person name="Fang G."/>
            <person name="Feller G."/>
            <person name="Ho C."/>
            <person name="Mangenot S."/>
            <person name="Marino G."/>
            <person name="Nilsson J."/>
            <person name="Parrilli E."/>
            <person name="Rocha E.P.C."/>
            <person name="Rouy Z."/>
            <person name="Sekowska A."/>
            <person name="Tutino M.L."/>
            <person name="Vallenet D."/>
            <person name="von Heijne G."/>
            <person name="Danchin A."/>
        </authorList>
    </citation>
    <scope>NUCLEOTIDE SEQUENCE [LARGE SCALE GENOMIC DNA]</scope>
    <source>
        <strain>TAC 125</strain>
    </source>
</reference>
<keyword id="KW-0997">Cell inner membrane</keyword>
<keyword id="KW-1003">Cell membrane</keyword>
<keyword id="KW-0350">Heme biosynthesis</keyword>
<keyword id="KW-0472">Membrane</keyword>
<keyword id="KW-1185">Reference proteome</keyword>
<keyword id="KW-0808">Transferase</keyword>
<keyword id="KW-0812">Transmembrane</keyword>
<keyword id="KW-1133">Transmembrane helix</keyword>
<sequence length="294" mass="31818">MFRRYLSVTKPGIIMGNLISVAGGFLLASRGDINPWLMVATLIGLSLVVASGCAINNVIDRDIDIAMARTRTRVTVTGEMSAMAALCHGVVLGIIGFGLLIAYTTPAAVFFAAFGYFIYVGVYSLYMKRNSVYGTFIGSLSGAVPPVVGYCAVSGEFDMGALILLVMFSLWQMPHSYAIAIFRFKDYQAAGIPVLPVAQGIDKAKRHIVLYIAIYALVVMLLPISGYTGAAFMAVACITSFWWLLMALRGYRRNIDISGWARQVFAFSIINITALSIAMAVDYQSIAPQLLALN</sequence>
<protein>
    <recommendedName>
        <fullName evidence="1">Protoheme IX farnesyltransferase 1</fullName>
        <ecNumber evidence="1">2.5.1.141</ecNumber>
    </recommendedName>
    <alternativeName>
        <fullName evidence="1">Heme B farnesyltransferase 1</fullName>
    </alternativeName>
    <alternativeName>
        <fullName evidence="1">Heme O synthase 1</fullName>
    </alternativeName>
</protein>
<name>CYOE1_PSET1</name>
<proteinExistence type="inferred from homology"/>
<gene>
    <name evidence="1" type="primary">cyoE1</name>
    <name type="ordered locus">PSHAa2227</name>
</gene>
<comment type="function">
    <text evidence="1">Converts heme B (protoheme IX) to heme O by substitution of the vinyl group on carbon 2 of heme B porphyrin ring with a hydroxyethyl farnesyl side group.</text>
</comment>
<comment type="catalytic activity">
    <reaction evidence="1">
        <text>heme b + (2E,6E)-farnesyl diphosphate + H2O = Fe(II)-heme o + diphosphate</text>
        <dbReference type="Rhea" id="RHEA:28070"/>
        <dbReference type="ChEBI" id="CHEBI:15377"/>
        <dbReference type="ChEBI" id="CHEBI:33019"/>
        <dbReference type="ChEBI" id="CHEBI:60344"/>
        <dbReference type="ChEBI" id="CHEBI:60530"/>
        <dbReference type="ChEBI" id="CHEBI:175763"/>
        <dbReference type="EC" id="2.5.1.141"/>
    </reaction>
</comment>
<comment type="pathway">
    <text evidence="1">Porphyrin-containing compound metabolism; heme O biosynthesis; heme O from protoheme: step 1/1.</text>
</comment>
<comment type="subcellular location">
    <subcellularLocation>
        <location evidence="1">Cell inner membrane</location>
        <topology evidence="1">Multi-pass membrane protein</topology>
    </subcellularLocation>
</comment>
<comment type="miscellaneous">
    <text evidence="1">Carbon 2 of the heme B porphyrin ring is defined according to the Fischer nomenclature.</text>
</comment>
<comment type="similarity">
    <text evidence="1">Belongs to the UbiA prenyltransferase family. Protoheme IX farnesyltransferase subfamily.</text>
</comment>
<accession>Q3IHM5</accession>
<evidence type="ECO:0000255" key="1">
    <source>
        <dbReference type="HAMAP-Rule" id="MF_00154"/>
    </source>
</evidence>
<dbReference type="EC" id="2.5.1.141" evidence="1"/>
<dbReference type="EMBL" id="CR954246">
    <property type="protein sequence ID" value="CAI87283.1"/>
    <property type="molecule type" value="Genomic_DNA"/>
</dbReference>
<dbReference type="SMR" id="Q3IHM5"/>
<dbReference type="STRING" id="326442.PSHAa2227"/>
<dbReference type="KEGG" id="pha:PSHAa2227"/>
<dbReference type="PATRIC" id="fig|326442.8.peg.2148"/>
<dbReference type="eggNOG" id="COG0109">
    <property type="taxonomic scope" value="Bacteria"/>
</dbReference>
<dbReference type="HOGENOM" id="CLU_029631_0_0_6"/>
<dbReference type="BioCyc" id="PHAL326442:PSHA_RS10990-MONOMER"/>
<dbReference type="UniPathway" id="UPA00834">
    <property type="reaction ID" value="UER00712"/>
</dbReference>
<dbReference type="Proteomes" id="UP000006843">
    <property type="component" value="Chromosome I"/>
</dbReference>
<dbReference type="GO" id="GO:0005886">
    <property type="term" value="C:plasma membrane"/>
    <property type="evidence" value="ECO:0007669"/>
    <property type="project" value="UniProtKB-SubCell"/>
</dbReference>
<dbReference type="GO" id="GO:0008495">
    <property type="term" value="F:protoheme IX farnesyltransferase activity"/>
    <property type="evidence" value="ECO:0007669"/>
    <property type="project" value="UniProtKB-UniRule"/>
</dbReference>
<dbReference type="GO" id="GO:0048034">
    <property type="term" value="P:heme O biosynthetic process"/>
    <property type="evidence" value="ECO:0007669"/>
    <property type="project" value="UniProtKB-UniRule"/>
</dbReference>
<dbReference type="CDD" id="cd13957">
    <property type="entry name" value="PT_UbiA_Cox10"/>
    <property type="match status" value="1"/>
</dbReference>
<dbReference type="FunFam" id="1.10.357.140:FF:000001">
    <property type="entry name" value="Protoheme IX farnesyltransferase"/>
    <property type="match status" value="1"/>
</dbReference>
<dbReference type="Gene3D" id="1.10.357.140">
    <property type="entry name" value="UbiA prenyltransferase"/>
    <property type="match status" value="1"/>
</dbReference>
<dbReference type="HAMAP" id="MF_00154">
    <property type="entry name" value="CyoE_CtaB"/>
    <property type="match status" value="1"/>
</dbReference>
<dbReference type="InterPro" id="IPR006369">
    <property type="entry name" value="Protohaem_IX_farnesylTrfase"/>
</dbReference>
<dbReference type="InterPro" id="IPR000537">
    <property type="entry name" value="UbiA_prenyltransferase"/>
</dbReference>
<dbReference type="InterPro" id="IPR030470">
    <property type="entry name" value="UbiA_prenylTrfase_CS"/>
</dbReference>
<dbReference type="InterPro" id="IPR044878">
    <property type="entry name" value="UbiA_sf"/>
</dbReference>
<dbReference type="NCBIfam" id="TIGR01473">
    <property type="entry name" value="cyoE_ctaB"/>
    <property type="match status" value="1"/>
</dbReference>
<dbReference type="NCBIfam" id="NF003348">
    <property type="entry name" value="PRK04375.1-1"/>
    <property type="match status" value="1"/>
</dbReference>
<dbReference type="PANTHER" id="PTHR43448">
    <property type="entry name" value="PROTOHEME IX FARNESYLTRANSFERASE, MITOCHONDRIAL"/>
    <property type="match status" value="1"/>
</dbReference>
<dbReference type="PANTHER" id="PTHR43448:SF2">
    <property type="entry name" value="PROTOHEME IX FARNESYLTRANSFERASE, MITOCHONDRIAL"/>
    <property type="match status" value="1"/>
</dbReference>
<dbReference type="Pfam" id="PF01040">
    <property type="entry name" value="UbiA"/>
    <property type="match status" value="1"/>
</dbReference>
<dbReference type="PROSITE" id="PS00943">
    <property type="entry name" value="UBIA"/>
    <property type="match status" value="1"/>
</dbReference>
<organism>
    <name type="scientific">Pseudoalteromonas translucida (strain TAC 125)</name>
    <dbReference type="NCBI Taxonomy" id="326442"/>
    <lineage>
        <taxon>Bacteria</taxon>
        <taxon>Pseudomonadati</taxon>
        <taxon>Pseudomonadota</taxon>
        <taxon>Gammaproteobacteria</taxon>
        <taxon>Alteromonadales</taxon>
        <taxon>Pseudoalteromonadaceae</taxon>
        <taxon>Pseudoalteromonas</taxon>
    </lineage>
</organism>
<feature type="chain" id="PRO_0000326916" description="Protoheme IX farnesyltransferase 1">
    <location>
        <begin position="1"/>
        <end position="294"/>
    </location>
</feature>
<feature type="transmembrane region" description="Helical" evidence="1">
    <location>
        <begin position="8"/>
        <end position="28"/>
    </location>
</feature>
<feature type="transmembrane region" description="Helical" evidence="1">
    <location>
        <begin position="35"/>
        <end position="55"/>
    </location>
</feature>
<feature type="transmembrane region" description="Helical" evidence="1">
    <location>
        <begin position="82"/>
        <end position="102"/>
    </location>
</feature>
<feature type="transmembrane region" description="Helical" evidence="1">
    <location>
        <begin position="107"/>
        <end position="127"/>
    </location>
</feature>
<feature type="transmembrane region" description="Helical" evidence="1">
    <location>
        <begin position="132"/>
        <end position="152"/>
    </location>
</feature>
<feature type="transmembrane region" description="Helical" evidence="1">
    <location>
        <begin position="162"/>
        <end position="182"/>
    </location>
</feature>
<feature type="transmembrane region" description="Helical" evidence="1">
    <location>
        <begin position="208"/>
        <end position="228"/>
    </location>
</feature>
<feature type="transmembrane region" description="Helical" evidence="1">
    <location>
        <begin position="229"/>
        <end position="249"/>
    </location>
</feature>
<feature type="transmembrane region" description="Helical" evidence="1">
    <location>
        <begin position="263"/>
        <end position="283"/>
    </location>
</feature>